<gene>
    <name type="primary">CHA1</name>
    <name type="ordered locus">YCL064C</name>
    <name type="ORF">YCL64C</name>
</gene>
<comment type="catalytic activity">
    <reaction>
        <text>L-serine = pyruvate + NH4(+)</text>
        <dbReference type="Rhea" id="RHEA:19169"/>
        <dbReference type="ChEBI" id="CHEBI:15361"/>
        <dbReference type="ChEBI" id="CHEBI:28938"/>
        <dbReference type="ChEBI" id="CHEBI:33384"/>
        <dbReference type="EC" id="4.3.1.17"/>
    </reaction>
</comment>
<comment type="catalytic activity">
    <reaction>
        <text>L-threonine = 2-oxobutanoate + NH4(+)</text>
        <dbReference type="Rhea" id="RHEA:22108"/>
        <dbReference type="ChEBI" id="CHEBI:16763"/>
        <dbReference type="ChEBI" id="CHEBI:28938"/>
        <dbReference type="ChEBI" id="CHEBI:57926"/>
        <dbReference type="EC" id="4.3.1.19"/>
    </reaction>
</comment>
<comment type="cofactor">
    <cofactor evidence="1">
        <name>pyridoxal 5'-phosphate</name>
        <dbReference type="ChEBI" id="CHEBI:597326"/>
    </cofactor>
</comment>
<comment type="interaction">
    <interactant intactId="EBI-3804607">
        <id>P25379</id>
    </interactant>
    <interactant intactId="EBI-14880">
        <id>P38622</id>
        <label>RCK1</label>
    </interactant>
    <organismsDiffer>false</organismsDiffer>
    <experiments>2</experiments>
</comment>
<comment type="subcellular location">
    <subcellularLocation>
        <location evidence="2 4">Mitochondrion</location>
    </subcellularLocation>
</comment>
<comment type="miscellaneous">
    <text evidence="3">Present with 36600 molecules/cell in log phase SD medium.</text>
</comment>
<comment type="similarity">
    <text evidence="5">Belongs to the serine/threonine dehydratase family.</text>
</comment>
<feature type="initiator methionine" description="Removed" evidence="6">
    <location>
        <position position="1"/>
    </location>
</feature>
<feature type="chain" id="PRO_0000185598" description="Catabolic L-serine/threonine dehydratase">
    <location>
        <begin position="2"/>
        <end position="360"/>
    </location>
</feature>
<feature type="modified residue" description="N-acetylserine" evidence="6">
    <location>
        <position position="2"/>
    </location>
</feature>
<feature type="modified residue" description="N6-(pyridoxal phosphate)lysine" evidence="1">
    <location>
        <position position="37"/>
    </location>
</feature>
<feature type="sequence conflict" description="In Ref. 1; AAA35040." evidence="5" ref="1">
    <original>G</original>
    <variation>A</variation>
    <location>
        <position position="34"/>
    </location>
</feature>
<feature type="sequence conflict" description="In Ref. 1; AAA35040." evidence="5" ref="1">
    <original>T</original>
    <variation>P</variation>
    <location>
        <position position="268"/>
    </location>
</feature>
<feature type="sequence conflict" description="In Ref. 1; AAA35040." evidence="5" ref="1">
    <original>GG</original>
    <variation>AS</variation>
    <location>
        <begin position="317"/>
        <end position="318"/>
    </location>
</feature>
<proteinExistence type="evidence at protein level"/>
<organism>
    <name type="scientific">Saccharomyces cerevisiae (strain ATCC 204508 / S288c)</name>
    <name type="common">Baker's yeast</name>
    <dbReference type="NCBI Taxonomy" id="559292"/>
    <lineage>
        <taxon>Eukaryota</taxon>
        <taxon>Fungi</taxon>
        <taxon>Dikarya</taxon>
        <taxon>Ascomycota</taxon>
        <taxon>Saccharomycotina</taxon>
        <taxon>Saccharomycetes</taxon>
        <taxon>Saccharomycetales</taxon>
        <taxon>Saccharomycetaceae</taxon>
        <taxon>Saccharomyces</taxon>
    </lineage>
</organism>
<protein>
    <recommendedName>
        <fullName>Catabolic L-serine/threonine dehydratase</fullName>
    </recommendedName>
    <domain>
        <recommendedName>
            <fullName>L-serine dehydratase</fullName>
            <ecNumber>4.3.1.17</ecNumber>
        </recommendedName>
        <alternativeName>
            <fullName>L-serine deaminase</fullName>
        </alternativeName>
    </domain>
    <domain>
        <recommendedName>
            <fullName>L-threonine dehydratase</fullName>
            <ecNumber>4.3.1.19</ecNumber>
        </recommendedName>
        <alternativeName>
            <fullName>L-threonine deaminase</fullName>
        </alternativeName>
    </domain>
</protein>
<name>STDH_YEAST</name>
<evidence type="ECO:0000250" key="1"/>
<evidence type="ECO:0000269" key="2">
    <source>
    </source>
</evidence>
<evidence type="ECO:0000269" key="3">
    <source>
    </source>
</evidence>
<evidence type="ECO:0000269" key="4">
    <source>
    </source>
</evidence>
<evidence type="ECO:0000305" key="5"/>
<evidence type="ECO:0007744" key="6">
    <source>
    </source>
</evidence>
<dbReference type="EC" id="4.3.1.17"/>
<dbReference type="EC" id="4.3.1.19"/>
<dbReference type="EMBL" id="M85194">
    <property type="protein sequence ID" value="AAA35040.1"/>
    <property type="molecule type" value="Genomic_DNA"/>
</dbReference>
<dbReference type="EMBL" id="X59720">
    <property type="protein sequence ID" value="CAA42403.2"/>
    <property type="molecule type" value="Genomic_DNA"/>
</dbReference>
<dbReference type="EMBL" id="BK006937">
    <property type="protein sequence ID" value="DAA07423.1"/>
    <property type="molecule type" value="Genomic_DNA"/>
</dbReference>
<dbReference type="PIR" id="S19395">
    <property type="entry name" value="DWBYLH"/>
</dbReference>
<dbReference type="RefSeq" id="NP_001018030.1">
    <property type="nucleotide sequence ID" value="NM_001178706.1"/>
</dbReference>
<dbReference type="SMR" id="P25379"/>
<dbReference type="BioGRID" id="30924">
    <property type="interactions" value="115"/>
</dbReference>
<dbReference type="DIP" id="DIP-7970N"/>
<dbReference type="FunCoup" id="P25379">
    <property type="interactions" value="637"/>
</dbReference>
<dbReference type="IntAct" id="P25379">
    <property type="interactions" value="72"/>
</dbReference>
<dbReference type="MINT" id="P25379"/>
<dbReference type="STRING" id="4932.YCL064C"/>
<dbReference type="iPTMnet" id="P25379"/>
<dbReference type="PaxDb" id="4932-YCL064C"/>
<dbReference type="PeptideAtlas" id="P25379"/>
<dbReference type="EnsemblFungi" id="YCL064C_mRNA">
    <property type="protein sequence ID" value="YCL064C"/>
    <property type="gene ID" value="YCL064C"/>
</dbReference>
<dbReference type="GeneID" id="850295"/>
<dbReference type="KEGG" id="sce:YCL064C"/>
<dbReference type="AGR" id="SGD:S000000569"/>
<dbReference type="SGD" id="S000000569">
    <property type="gene designation" value="CHA1"/>
</dbReference>
<dbReference type="VEuPathDB" id="FungiDB:YCL064C"/>
<dbReference type="eggNOG" id="KOG1250">
    <property type="taxonomic scope" value="Eukaryota"/>
</dbReference>
<dbReference type="GeneTree" id="ENSGT00940000174246"/>
<dbReference type="HOGENOM" id="CLU_021152_3_1_1"/>
<dbReference type="InParanoid" id="P25379"/>
<dbReference type="OMA" id="AEQGCEH"/>
<dbReference type="OrthoDB" id="7773036at2759"/>
<dbReference type="BioCyc" id="YEAST:YCL064C-MONOMER"/>
<dbReference type="Reactome" id="R-SCE-8849175">
    <property type="pathway name" value="Threonine catabolism"/>
</dbReference>
<dbReference type="BioGRID-ORCS" id="850295">
    <property type="hits" value="0 hits in 10 CRISPR screens"/>
</dbReference>
<dbReference type="PRO" id="PR:P25379"/>
<dbReference type="Proteomes" id="UP000002311">
    <property type="component" value="Chromosome III"/>
</dbReference>
<dbReference type="RNAct" id="P25379">
    <property type="molecule type" value="protein"/>
</dbReference>
<dbReference type="GO" id="GO:0042645">
    <property type="term" value="C:mitochondrial nucleoid"/>
    <property type="evidence" value="ECO:0000314"/>
    <property type="project" value="SGD"/>
</dbReference>
<dbReference type="GO" id="GO:0005739">
    <property type="term" value="C:mitochondrion"/>
    <property type="evidence" value="ECO:0007005"/>
    <property type="project" value="SGD"/>
</dbReference>
<dbReference type="GO" id="GO:0003941">
    <property type="term" value="F:L-serine ammonia-lyase activity"/>
    <property type="evidence" value="ECO:0000314"/>
    <property type="project" value="SGD"/>
</dbReference>
<dbReference type="GO" id="GO:0030170">
    <property type="term" value="F:pyridoxal phosphate binding"/>
    <property type="evidence" value="ECO:0007669"/>
    <property type="project" value="InterPro"/>
</dbReference>
<dbReference type="GO" id="GO:0004794">
    <property type="term" value="F:threonine deaminase activity"/>
    <property type="evidence" value="ECO:0000314"/>
    <property type="project" value="SGD"/>
</dbReference>
<dbReference type="GO" id="GO:0006565">
    <property type="term" value="P:L-serine catabolic process"/>
    <property type="evidence" value="ECO:0000316"/>
    <property type="project" value="SGD"/>
</dbReference>
<dbReference type="GO" id="GO:0006567">
    <property type="term" value="P:threonine catabolic process"/>
    <property type="evidence" value="ECO:0000316"/>
    <property type="project" value="SGD"/>
</dbReference>
<dbReference type="CDD" id="cd06448">
    <property type="entry name" value="L-Ser-dehyd"/>
    <property type="match status" value="1"/>
</dbReference>
<dbReference type="FunFam" id="3.40.50.1100:FF:000068">
    <property type="entry name" value="Catabolic L-serine/threonine dehydratase"/>
    <property type="match status" value="1"/>
</dbReference>
<dbReference type="Gene3D" id="3.40.50.1100">
    <property type="match status" value="2"/>
</dbReference>
<dbReference type="InterPro" id="IPR050147">
    <property type="entry name" value="Ser/Thr_Dehydratase"/>
</dbReference>
<dbReference type="InterPro" id="IPR000634">
    <property type="entry name" value="Ser/Thr_deHydtase_PyrdxlP-BS"/>
</dbReference>
<dbReference type="InterPro" id="IPR001926">
    <property type="entry name" value="TrpB-like_PALP"/>
</dbReference>
<dbReference type="InterPro" id="IPR036052">
    <property type="entry name" value="TrpB-like_PALP_sf"/>
</dbReference>
<dbReference type="PANTHER" id="PTHR48078:SF2">
    <property type="entry name" value="CATABOLIC L-SERINE_THREONINE DEHYDRATASE"/>
    <property type="match status" value="1"/>
</dbReference>
<dbReference type="PANTHER" id="PTHR48078">
    <property type="entry name" value="THREONINE DEHYDRATASE, MITOCHONDRIAL-RELATED"/>
    <property type="match status" value="1"/>
</dbReference>
<dbReference type="Pfam" id="PF00291">
    <property type="entry name" value="PALP"/>
    <property type="match status" value="1"/>
</dbReference>
<dbReference type="SUPFAM" id="SSF53686">
    <property type="entry name" value="Tryptophan synthase beta subunit-like PLP-dependent enzymes"/>
    <property type="match status" value="1"/>
</dbReference>
<dbReference type="PROSITE" id="PS00165">
    <property type="entry name" value="DEHYDRATASE_SER_THR"/>
    <property type="match status" value="1"/>
</dbReference>
<keyword id="KW-0007">Acetylation</keyword>
<keyword id="KW-0456">Lyase</keyword>
<keyword id="KW-0496">Mitochondrion</keyword>
<keyword id="KW-0663">Pyridoxal phosphate</keyword>
<keyword id="KW-1185">Reference proteome</keyword>
<reference key="1">
    <citation type="journal article" date="1992" name="Genetics">
        <title>Serine and threonine catabolism in Saccharomyces cerevisiae: the CHA1 polypeptide is homologous with other serine and threonine dehydratases.</title>
        <authorList>
            <person name="Bornaes C."/>
            <person name="Petersen J.G."/>
            <person name="Holmberg S."/>
        </authorList>
    </citation>
    <scope>NUCLEOTIDE SEQUENCE [GENOMIC DNA]</scope>
    <scope>FUNCTION</scope>
</reference>
<reference key="2">
    <citation type="journal article" date="1992" name="Nature">
        <title>The complete DNA sequence of yeast chromosome III.</title>
        <authorList>
            <person name="Oliver S.G."/>
            <person name="van der Aart Q.J.M."/>
            <person name="Agostoni-Carbone M.L."/>
            <person name="Aigle M."/>
            <person name="Alberghina L."/>
            <person name="Alexandraki D."/>
            <person name="Antoine G."/>
            <person name="Anwar R."/>
            <person name="Ballesta J.P.G."/>
            <person name="Benit P."/>
            <person name="Berben G."/>
            <person name="Bergantino E."/>
            <person name="Biteau N."/>
            <person name="Bolle P.-A."/>
            <person name="Bolotin-Fukuhara M."/>
            <person name="Brown A."/>
            <person name="Brown A.J.P."/>
            <person name="Buhler J.-M."/>
            <person name="Carcano C."/>
            <person name="Carignani G."/>
            <person name="Cederberg H."/>
            <person name="Chanet R."/>
            <person name="Contreras R."/>
            <person name="Crouzet M."/>
            <person name="Daignan-Fornier B."/>
            <person name="Defoor E."/>
            <person name="Delgado M.D."/>
            <person name="Demolder J."/>
            <person name="Doira C."/>
            <person name="Dubois E."/>
            <person name="Dujon B."/>
            <person name="Duesterhoeft A."/>
            <person name="Erdmann D."/>
            <person name="Esteban M."/>
            <person name="Fabre F."/>
            <person name="Fairhead C."/>
            <person name="Faye G."/>
            <person name="Feldmann H."/>
            <person name="Fiers W."/>
            <person name="Francingues-Gaillard M.-C."/>
            <person name="Franco L."/>
            <person name="Frontali L."/>
            <person name="Fukuhara H."/>
            <person name="Fuller L.J."/>
            <person name="Galland P."/>
            <person name="Gent M.E."/>
            <person name="Gigot D."/>
            <person name="Gilliquet V."/>
            <person name="Glansdorff N."/>
            <person name="Goffeau A."/>
            <person name="Grenson M."/>
            <person name="Grisanti P."/>
            <person name="Grivell L.A."/>
            <person name="de Haan M."/>
            <person name="Haasemann M."/>
            <person name="Hatat D."/>
            <person name="Hoenicka J."/>
            <person name="Hegemann J.H."/>
            <person name="Herbert C.J."/>
            <person name="Hilger F."/>
            <person name="Hohmann S."/>
            <person name="Hollenberg C.P."/>
            <person name="Huse K."/>
            <person name="Iborra F."/>
            <person name="Indge K.J."/>
            <person name="Isono K."/>
            <person name="Jacq C."/>
            <person name="Jacquet M."/>
            <person name="James C.M."/>
            <person name="Jauniaux J.-C."/>
            <person name="Jia Y."/>
            <person name="Jimenez A."/>
            <person name="Kelly A."/>
            <person name="Kleinhans U."/>
            <person name="Kreisl P."/>
            <person name="Lanfranchi G."/>
            <person name="Lewis C."/>
            <person name="van der Linden C.G."/>
            <person name="Lucchini G."/>
            <person name="Lutzenkirchen K."/>
            <person name="Maat M.J."/>
            <person name="Mallet L."/>
            <person name="Mannhaupt G."/>
            <person name="Martegani E."/>
            <person name="Mathieu A."/>
            <person name="Maurer C.T.C."/>
            <person name="McConnell D."/>
            <person name="McKee R.A."/>
            <person name="Messenguy F."/>
            <person name="Mewes H.-W."/>
            <person name="Molemans F."/>
            <person name="Montague M.A."/>
            <person name="Muzi Falconi M."/>
            <person name="Navas L."/>
            <person name="Newlon C.S."/>
            <person name="Noone D."/>
            <person name="Pallier C."/>
            <person name="Panzeri L."/>
            <person name="Pearson B.M."/>
            <person name="Perea J."/>
            <person name="Philippsen P."/>
            <person name="Pierard A."/>
            <person name="Planta R.J."/>
            <person name="Plevani P."/>
            <person name="Poetsch B."/>
            <person name="Pohl F.M."/>
            <person name="Purnelle B."/>
            <person name="Ramezani Rad M."/>
            <person name="Rasmussen S.W."/>
            <person name="Raynal A."/>
            <person name="Remacha M.A."/>
            <person name="Richterich P."/>
            <person name="Roberts A.B."/>
            <person name="Rodriguez F."/>
            <person name="Sanz E."/>
            <person name="Schaaff-Gerstenschlaeger I."/>
            <person name="Scherens B."/>
            <person name="Schweitzer B."/>
            <person name="Shu Y."/>
            <person name="Skala J."/>
            <person name="Slonimski P.P."/>
            <person name="Sor F."/>
            <person name="Soustelle C."/>
            <person name="Spiegelberg R."/>
            <person name="Stateva L.I."/>
            <person name="Steensma H.Y."/>
            <person name="Steiner S."/>
            <person name="Thierry A."/>
            <person name="Thireos G."/>
            <person name="Tzermia M."/>
            <person name="Urrestarazu L.A."/>
            <person name="Valle G."/>
            <person name="Vetter I."/>
            <person name="van Vliet-Reedijk J.C."/>
            <person name="Voet M."/>
            <person name="Volckaert G."/>
            <person name="Vreken P."/>
            <person name="Wang H."/>
            <person name="Warmington J.R."/>
            <person name="von Wettstein D."/>
            <person name="Wicksteed B.L."/>
            <person name="Wilson C."/>
            <person name="Wurst H."/>
            <person name="Xu G."/>
            <person name="Yoshikawa A."/>
            <person name="Zimmermann F.K."/>
            <person name="Sgouros J.G."/>
        </authorList>
    </citation>
    <scope>NUCLEOTIDE SEQUENCE [LARGE SCALE GENOMIC DNA]</scope>
    <source>
        <strain>ATCC 204508 / S288c</strain>
    </source>
</reference>
<reference key="3">
    <citation type="submission" date="2001-06" db="EMBL/GenBank/DDBJ databases">
        <authorList>
            <person name="Valles G."/>
            <person name="Volckaerts G."/>
        </authorList>
    </citation>
    <scope>SEQUENCE REVISION TO 268; 317 AND 318</scope>
</reference>
<reference key="4">
    <citation type="journal article" date="2014" name="G3 (Bethesda)">
        <title>The reference genome sequence of Saccharomyces cerevisiae: Then and now.</title>
        <authorList>
            <person name="Engel S.R."/>
            <person name="Dietrich F.S."/>
            <person name="Fisk D.G."/>
            <person name="Binkley G."/>
            <person name="Balakrishnan R."/>
            <person name="Costanzo M.C."/>
            <person name="Dwight S.S."/>
            <person name="Hitz B.C."/>
            <person name="Karra K."/>
            <person name="Nash R.S."/>
            <person name="Weng S."/>
            <person name="Wong E.D."/>
            <person name="Lloyd P."/>
            <person name="Skrzypek M.S."/>
            <person name="Miyasato S.R."/>
            <person name="Simison M."/>
            <person name="Cherry J.M."/>
        </authorList>
    </citation>
    <scope>GENOME REANNOTATION</scope>
    <source>
        <strain>ATCC 204508 / S288c</strain>
    </source>
</reference>
<reference key="5">
    <citation type="journal article" date="2003" name="Nature">
        <title>Global analysis of protein localization in budding yeast.</title>
        <authorList>
            <person name="Huh W.-K."/>
            <person name="Falvo J.V."/>
            <person name="Gerke L.C."/>
            <person name="Carroll A.S."/>
            <person name="Howson R.W."/>
            <person name="Weissman J.S."/>
            <person name="O'Shea E.K."/>
        </authorList>
    </citation>
    <scope>SUBCELLULAR LOCATION [LARGE SCALE ANALYSIS]</scope>
</reference>
<reference key="6">
    <citation type="journal article" date="2003" name="Nature">
        <title>Global analysis of protein expression in yeast.</title>
        <authorList>
            <person name="Ghaemmaghami S."/>
            <person name="Huh W.-K."/>
            <person name="Bower K."/>
            <person name="Howson R.W."/>
            <person name="Belle A."/>
            <person name="Dephoure N."/>
            <person name="O'Shea E.K."/>
            <person name="Weissman J.S."/>
        </authorList>
    </citation>
    <scope>LEVEL OF PROTEIN EXPRESSION [LARGE SCALE ANALYSIS]</scope>
</reference>
<reference key="7">
    <citation type="journal article" date="2006" name="J. Proteome Res.">
        <title>Toward the complete yeast mitochondrial proteome: multidimensional separation techniques for mitochondrial proteomics.</title>
        <authorList>
            <person name="Reinders J."/>
            <person name="Zahedi R.P."/>
            <person name="Pfanner N."/>
            <person name="Meisinger C."/>
            <person name="Sickmann A."/>
        </authorList>
    </citation>
    <scope>SUBCELLULAR LOCATION [LARGE SCALE ANALYSIS]</scope>
    <scope>IDENTIFICATION BY MASS SPECTROMETRY</scope>
</reference>
<reference key="8">
    <citation type="journal article" date="2012" name="Proc. Natl. Acad. Sci. U.S.A.">
        <title>N-terminal acetylome analyses and functional insights of the N-terminal acetyltransferase NatB.</title>
        <authorList>
            <person name="Van Damme P."/>
            <person name="Lasa M."/>
            <person name="Polevoda B."/>
            <person name="Gazquez C."/>
            <person name="Elosegui-Artola A."/>
            <person name="Kim D.S."/>
            <person name="De Juan-Pardo E."/>
            <person name="Demeyer K."/>
            <person name="Hole K."/>
            <person name="Larrea E."/>
            <person name="Timmerman E."/>
            <person name="Prieto J."/>
            <person name="Arnesen T."/>
            <person name="Sherman F."/>
            <person name="Gevaert K."/>
            <person name="Aldabe R."/>
        </authorList>
    </citation>
    <scope>ACETYLATION [LARGE SCALE ANALYSIS] AT SER-2</scope>
    <scope>CLEAVAGE OF INITIATOR METHIONINE [LARGE SCALE ANALYSIS]</scope>
    <scope>IDENTIFICATION BY MASS SPECTROMETRY [LARGE SCALE ANALYSIS]</scope>
</reference>
<sequence length="360" mass="39301">MSIVYNKTPLLRQFFPGKASAQFFLKYECLQPSGSFKSRGIGNLIMKSAIRIQKDGKRSPQVFASSGGNAGFAAATACQRLSLPCTVVVPTATKKRMVDKIRNTGAQVIVSGAYWKEADTFLKTNVMNKIDSQVIEPIYVHPFDNPDIWEGHSSMIDEIVQDLKSQHISVNKVKGIVCSVGGGGLYNGIIQGLERYGLADRIPIVGVETNGCHVFNTSLKIGQPVQFKKITSIATSLGTAVISNQTFEYARKYNTRSVVIEDKDVIETCLKYTHQFNMVIEPACGAALHLGYNTKILENALGSKLAADDIVIIIACGGSSNTIKDLEEALDSMRKKDTPVIEVADNFIFPEKNIVNLKSA</sequence>
<accession>P25379</accession>
<accession>D6VQV4</accession>